<keyword id="KW-0067">ATP-binding</keyword>
<keyword id="KW-0342">GTP-binding</keyword>
<keyword id="KW-0547">Nucleotide-binding</keyword>
<keyword id="KW-1185">Reference proteome</keyword>
<accession>B6IVB4</accession>
<sequence length="332" mass="36976">MTGQPLTMETAAGADAGTGAATHPADGRRPVVVVTGMSGGGLSTALKALEDLGYEAVDNLRLSLLTALVFQAHDRPLAIGIDSRTRDFSADALLQELDALRAHPDLRVRLLFMEATEEVLQRRYTETRRPHPLAVDRPVPDGIALERTLLVPLREAAEVVIDTSQLSIHDVRRLLTGHFRLDGDPSLHVFVTSFAYRHGVPREADLVFDVRFLDNPHWDPALRPLTGLDRPVAEHVGRDPDFPDFFRHLTTLLAPLLPRYAREGKHYLTIAIGCTGGRHRSVFTAHRLAGWLRDQGYKVGEGHRDLDRRHPAPEPAPPWREVASRETPEEHR</sequence>
<gene>
    <name type="ordered locus">RC1_2868</name>
</gene>
<evidence type="ECO:0000255" key="1">
    <source>
        <dbReference type="HAMAP-Rule" id="MF_00636"/>
    </source>
</evidence>
<evidence type="ECO:0000256" key="2">
    <source>
        <dbReference type="SAM" id="MobiDB-lite"/>
    </source>
</evidence>
<feature type="chain" id="PRO_0000383283" description="Nucleotide-binding protein RC1_2868">
    <location>
        <begin position="1"/>
        <end position="332"/>
    </location>
</feature>
<feature type="region of interest" description="Disordered" evidence="2">
    <location>
        <begin position="1"/>
        <end position="27"/>
    </location>
</feature>
<feature type="region of interest" description="Disordered" evidence="2">
    <location>
        <begin position="302"/>
        <end position="332"/>
    </location>
</feature>
<feature type="compositionally biased region" description="Low complexity" evidence="2">
    <location>
        <begin position="10"/>
        <end position="22"/>
    </location>
</feature>
<feature type="compositionally biased region" description="Basic and acidic residues" evidence="2">
    <location>
        <begin position="302"/>
        <end position="312"/>
    </location>
</feature>
<feature type="compositionally biased region" description="Basic and acidic residues" evidence="2">
    <location>
        <begin position="322"/>
        <end position="332"/>
    </location>
</feature>
<feature type="binding site" evidence="1">
    <location>
        <begin position="36"/>
        <end position="43"/>
    </location>
    <ligand>
        <name>ATP</name>
        <dbReference type="ChEBI" id="CHEBI:30616"/>
    </ligand>
</feature>
<feature type="binding site" evidence="1">
    <location>
        <begin position="82"/>
        <end position="85"/>
    </location>
    <ligand>
        <name>GTP</name>
        <dbReference type="ChEBI" id="CHEBI:37565"/>
    </ligand>
</feature>
<proteinExistence type="inferred from homology"/>
<reference key="1">
    <citation type="submission" date="2007-03" db="EMBL/GenBank/DDBJ databases">
        <title>Genome sequence of Rhodospirillum centenum.</title>
        <authorList>
            <person name="Touchman J.W."/>
            <person name="Bauer C."/>
            <person name="Blankenship R.E."/>
        </authorList>
    </citation>
    <scope>NUCLEOTIDE SEQUENCE [LARGE SCALE GENOMIC DNA]</scope>
    <source>
        <strain>ATCC 51521 / SW</strain>
    </source>
</reference>
<comment type="function">
    <text evidence="1">Displays ATPase and GTPase activities.</text>
</comment>
<comment type="similarity">
    <text evidence="1">Belongs to the RapZ-like family.</text>
</comment>
<organism>
    <name type="scientific">Rhodospirillum centenum (strain ATCC 51521 / SW)</name>
    <dbReference type="NCBI Taxonomy" id="414684"/>
    <lineage>
        <taxon>Bacteria</taxon>
        <taxon>Pseudomonadati</taxon>
        <taxon>Pseudomonadota</taxon>
        <taxon>Alphaproteobacteria</taxon>
        <taxon>Rhodospirillales</taxon>
        <taxon>Rhodospirillaceae</taxon>
        <taxon>Rhodospirillum</taxon>
    </lineage>
</organism>
<dbReference type="EMBL" id="CP000613">
    <property type="protein sequence ID" value="ACJ00238.1"/>
    <property type="molecule type" value="Genomic_DNA"/>
</dbReference>
<dbReference type="RefSeq" id="WP_012568018.1">
    <property type="nucleotide sequence ID" value="NC_011420.2"/>
</dbReference>
<dbReference type="SMR" id="B6IVB4"/>
<dbReference type="STRING" id="414684.RC1_2868"/>
<dbReference type="KEGG" id="rce:RC1_2868"/>
<dbReference type="eggNOG" id="COG1660">
    <property type="taxonomic scope" value="Bacteria"/>
</dbReference>
<dbReference type="HOGENOM" id="CLU_059558_0_0_5"/>
<dbReference type="OrthoDB" id="9784461at2"/>
<dbReference type="Proteomes" id="UP000001591">
    <property type="component" value="Chromosome"/>
</dbReference>
<dbReference type="GO" id="GO:0005524">
    <property type="term" value="F:ATP binding"/>
    <property type="evidence" value="ECO:0007669"/>
    <property type="project" value="UniProtKB-UniRule"/>
</dbReference>
<dbReference type="GO" id="GO:0005525">
    <property type="term" value="F:GTP binding"/>
    <property type="evidence" value="ECO:0007669"/>
    <property type="project" value="UniProtKB-UniRule"/>
</dbReference>
<dbReference type="HAMAP" id="MF_00636">
    <property type="entry name" value="RapZ_like"/>
    <property type="match status" value="1"/>
</dbReference>
<dbReference type="InterPro" id="IPR027417">
    <property type="entry name" value="P-loop_NTPase"/>
</dbReference>
<dbReference type="InterPro" id="IPR005337">
    <property type="entry name" value="RapZ-like"/>
</dbReference>
<dbReference type="InterPro" id="IPR053930">
    <property type="entry name" value="RapZ-like_N"/>
</dbReference>
<dbReference type="InterPro" id="IPR053931">
    <property type="entry name" value="RapZ_C"/>
</dbReference>
<dbReference type="NCBIfam" id="NF003828">
    <property type="entry name" value="PRK05416.1"/>
    <property type="match status" value="1"/>
</dbReference>
<dbReference type="PANTHER" id="PTHR30448">
    <property type="entry name" value="RNASE ADAPTER PROTEIN RAPZ"/>
    <property type="match status" value="1"/>
</dbReference>
<dbReference type="PANTHER" id="PTHR30448:SF0">
    <property type="entry name" value="RNASE ADAPTER PROTEIN RAPZ"/>
    <property type="match status" value="1"/>
</dbReference>
<dbReference type="Pfam" id="PF22740">
    <property type="entry name" value="PapZ_C"/>
    <property type="match status" value="1"/>
</dbReference>
<dbReference type="Pfam" id="PF03668">
    <property type="entry name" value="RapZ-like_N"/>
    <property type="match status" value="1"/>
</dbReference>
<dbReference type="PIRSF" id="PIRSF005052">
    <property type="entry name" value="P-loopkin"/>
    <property type="match status" value="1"/>
</dbReference>
<dbReference type="SUPFAM" id="SSF52540">
    <property type="entry name" value="P-loop containing nucleoside triphosphate hydrolases"/>
    <property type="match status" value="1"/>
</dbReference>
<protein>
    <recommendedName>
        <fullName evidence="1">Nucleotide-binding protein RC1_2868</fullName>
    </recommendedName>
</protein>
<name>Y2868_RHOCS</name>